<evidence type="ECO:0000255" key="1">
    <source>
        <dbReference type="PROSITE-ProRule" id="PRU00042"/>
    </source>
</evidence>
<evidence type="ECO:0000256" key="2">
    <source>
        <dbReference type="SAM" id="MobiDB-lite"/>
    </source>
</evidence>
<evidence type="ECO:0000305" key="3"/>
<reference key="1">
    <citation type="journal article" date="1989" name="J. Mol. Biol.">
        <title>Second-order repeats in Xenopus laevis finger proteins.</title>
        <authorList>
            <person name="Nietfeld W."/>
            <person name="El-Baradi T."/>
            <person name="Mentzel H."/>
            <person name="Pieler T."/>
            <person name="Koester M."/>
            <person name="Poeting A."/>
            <person name="Knoechel W."/>
        </authorList>
    </citation>
    <scope>NUCLEOTIDE SEQUENCE</scope>
</reference>
<proteinExistence type="inferred from homology"/>
<keyword id="KW-0238">DNA-binding</keyword>
<keyword id="KW-0479">Metal-binding</keyword>
<keyword id="KW-0539">Nucleus</keyword>
<keyword id="KW-1185">Reference proteome</keyword>
<keyword id="KW-0677">Repeat</keyword>
<keyword id="KW-0804">Transcription</keyword>
<keyword id="KW-0805">Transcription regulation</keyword>
<keyword id="KW-0862">Zinc</keyword>
<keyword id="KW-0863">Zinc-finger</keyword>
<comment type="function">
    <text>May be involved in transcriptional regulation.</text>
</comment>
<comment type="subcellular location">
    <subcellularLocation>
        <location evidence="3">Nucleus</location>
    </subcellularLocation>
</comment>
<comment type="similarity">
    <text evidence="3">Belongs to the krueppel C2H2-type zinc-finger protein family.</text>
</comment>
<name>ZO28_XENLA</name>
<organism>
    <name type="scientific">Xenopus laevis</name>
    <name type="common">African clawed frog</name>
    <dbReference type="NCBI Taxonomy" id="8355"/>
    <lineage>
        <taxon>Eukaryota</taxon>
        <taxon>Metazoa</taxon>
        <taxon>Chordata</taxon>
        <taxon>Craniata</taxon>
        <taxon>Vertebrata</taxon>
        <taxon>Euteleostomi</taxon>
        <taxon>Amphibia</taxon>
        <taxon>Batrachia</taxon>
        <taxon>Anura</taxon>
        <taxon>Pipoidea</taxon>
        <taxon>Pipidae</taxon>
        <taxon>Xenopodinae</taxon>
        <taxon>Xenopus</taxon>
        <taxon>Xenopus</taxon>
    </lineage>
</organism>
<dbReference type="PIR" id="S06556">
    <property type="entry name" value="S06556"/>
</dbReference>
<dbReference type="SMR" id="P18747"/>
<dbReference type="Proteomes" id="UP000186698">
    <property type="component" value="Unplaced"/>
</dbReference>
<dbReference type="GO" id="GO:0005634">
    <property type="term" value="C:nucleus"/>
    <property type="evidence" value="ECO:0000318"/>
    <property type="project" value="GO_Central"/>
</dbReference>
<dbReference type="GO" id="GO:0001228">
    <property type="term" value="F:DNA-binding transcription activator activity, RNA polymerase II-specific"/>
    <property type="evidence" value="ECO:0000318"/>
    <property type="project" value="GO_Central"/>
</dbReference>
<dbReference type="GO" id="GO:0000978">
    <property type="term" value="F:RNA polymerase II cis-regulatory region sequence-specific DNA binding"/>
    <property type="evidence" value="ECO:0000318"/>
    <property type="project" value="GO_Central"/>
</dbReference>
<dbReference type="GO" id="GO:0008270">
    <property type="term" value="F:zinc ion binding"/>
    <property type="evidence" value="ECO:0007669"/>
    <property type="project" value="UniProtKB-KW"/>
</dbReference>
<dbReference type="GO" id="GO:0006357">
    <property type="term" value="P:regulation of transcription by RNA polymerase II"/>
    <property type="evidence" value="ECO:0000318"/>
    <property type="project" value="GO_Central"/>
</dbReference>
<dbReference type="FunFam" id="3.30.160.60:FF:000739">
    <property type="entry name" value="Zgc:171418 protein"/>
    <property type="match status" value="1"/>
</dbReference>
<dbReference type="FunFam" id="3.30.160.60:FF:000478">
    <property type="entry name" value="Zinc finger protein 133"/>
    <property type="match status" value="2"/>
</dbReference>
<dbReference type="FunFam" id="3.30.160.60:FF:000759">
    <property type="entry name" value="zinc finger protein 16"/>
    <property type="match status" value="1"/>
</dbReference>
<dbReference type="FunFam" id="3.30.160.60:FF:000295">
    <property type="entry name" value="zinc finger protein 19"/>
    <property type="match status" value="1"/>
</dbReference>
<dbReference type="FunFam" id="3.30.160.60:FF:000358">
    <property type="entry name" value="zinc finger protein 24"/>
    <property type="match status" value="1"/>
</dbReference>
<dbReference type="FunFam" id="3.30.160.60:FF:002240">
    <property type="entry name" value="Zinc finger protein 26-like Protein"/>
    <property type="match status" value="2"/>
</dbReference>
<dbReference type="FunFam" id="3.30.160.60:FF:001530">
    <property type="entry name" value="Zinc finger protein 268"/>
    <property type="match status" value="1"/>
</dbReference>
<dbReference type="FunFam" id="3.30.160.60:FF:002343">
    <property type="entry name" value="Zinc finger protein 33A"/>
    <property type="match status" value="1"/>
</dbReference>
<dbReference type="FunFam" id="3.30.160.60:FF:000848">
    <property type="entry name" value="Zinc finger protein 35"/>
    <property type="match status" value="1"/>
</dbReference>
<dbReference type="FunFam" id="3.30.160.60:FF:000202">
    <property type="entry name" value="Zinc finger protein 574"/>
    <property type="match status" value="1"/>
</dbReference>
<dbReference type="FunFam" id="3.30.160.60:FF:000394">
    <property type="entry name" value="Zinc finger protein 836"/>
    <property type="match status" value="1"/>
</dbReference>
<dbReference type="Gene3D" id="3.30.160.60">
    <property type="entry name" value="Classic Zinc Finger"/>
    <property type="match status" value="13"/>
</dbReference>
<dbReference type="InterPro" id="IPR050527">
    <property type="entry name" value="Snail/Krueppel_Znf"/>
</dbReference>
<dbReference type="InterPro" id="IPR036236">
    <property type="entry name" value="Znf_C2H2_sf"/>
</dbReference>
<dbReference type="InterPro" id="IPR013087">
    <property type="entry name" value="Znf_C2H2_type"/>
</dbReference>
<dbReference type="PANTHER" id="PTHR24388:SF54">
    <property type="entry name" value="PROTEIN ESCARGOT"/>
    <property type="match status" value="1"/>
</dbReference>
<dbReference type="PANTHER" id="PTHR24388">
    <property type="entry name" value="ZINC FINGER PROTEIN"/>
    <property type="match status" value="1"/>
</dbReference>
<dbReference type="Pfam" id="PF00096">
    <property type="entry name" value="zf-C2H2"/>
    <property type="match status" value="12"/>
</dbReference>
<dbReference type="Pfam" id="PF13912">
    <property type="entry name" value="zf-C2H2_6"/>
    <property type="match status" value="1"/>
</dbReference>
<dbReference type="SMART" id="SM00355">
    <property type="entry name" value="ZnF_C2H2"/>
    <property type="match status" value="13"/>
</dbReference>
<dbReference type="SUPFAM" id="SSF57667">
    <property type="entry name" value="beta-beta-alpha zinc fingers"/>
    <property type="match status" value="7"/>
</dbReference>
<dbReference type="PROSITE" id="PS00028">
    <property type="entry name" value="ZINC_FINGER_C2H2_1"/>
    <property type="match status" value="13"/>
</dbReference>
<dbReference type="PROSITE" id="PS50157">
    <property type="entry name" value="ZINC_FINGER_C2H2_2"/>
    <property type="match status" value="13"/>
</dbReference>
<feature type="chain" id="PRO_0000047822" description="Oocyte zinc finger protein XlCOF28">
    <location>
        <begin position="1" status="less than"/>
        <end position="439" status="greater than"/>
    </location>
</feature>
<feature type="zinc finger region" description="C2H2-type 1" evidence="1">
    <location>
        <begin position="6"/>
        <end position="28"/>
    </location>
</feature>
<feature type="zinc finger region" description="C2H2-type 2" evidence="1">
    <location>
        <begin position="34"/>
        <end position="56"/>
    </location>
</feature>
<feature type="zinc finger region" description="C2H2-type 3" evidence="1">
    <location>
        <begin position="62"/>
        <end position="84"/>
    </location>
</feature>
<feature type="zinc finger region" description="C2H2-type 4" evidence="1">
    <location>
        <begin position="90"/>
        <end position="112"/>
    </location>
</feature>
<feature type="zinc finger region" description="C2H2-type 5" evidence="1">
    <location>
        <begin position="118"/>
        <end position="140"/>
    </location>
</feature>
<feature type="zinc finger region" description="C2H2-type 6" evidence="1">
    <location>
        <begin position="146"/>
        <end position="168"/>
    </location>
</feature>
<feature type="zinc finger region" description="C2H2-type 7" evidence="1">
    <location>
        <begin position="174"/>
        <end position="196"/>
    </location>
</feature>
<feature type="zinc finger region" description="C2H2-type 8" evidence="1">
    <location>
        <begin position="202"/>
        <end position="224"/>
    </location>
</feature>
<feature type="zinc finger region" description="C2H2-type 9" evidence="1">
    <location>
        <begin position="230"/>
        <end position="252"/>
    </location>
</feature>
<feature type="zinc finger region" description="C2H2-type 10" evidence="1">
    <location>
        <begin position="333"/>
        <end position="355"/>
    </location>
</feature>
<feature type="zinc finger region" description="C2H2-type 11" evidence="1">
    <location>
        <begin position="361"/>
        <end position="383"/>
    </location>
</feature>
<feature type="zinc finger region" description="C2H2-type 12" evidence="1">
    <location>
        <begin position="389"/>
        <end position="411"/>
    </location>
</feature>
<feature type="zinc finger region" description="C2H2-type 13" evidence="1">
    <location>
        <begin position="417"/>
        <end position="439"/>
    </location>
</feature>
<feature type="region of interest" description="Disordered" evidence="2">
    <location>
        <begin position="246"/>
        <end position="275"/>
    </location>
</feature>
<feature type="region of interest" description="Disordered" evidence="2">
    <location>
        <begin position="285"/>
        <end position="304"/>
    </location>
</feature>
<feature type="non-terminal residue">
    <location>
        <position position="1"/>
    </location>
</feature>
<feature type="non-terminal residue">
    <location>
        <position position="439"/>
    </location>
</feature>
<sequence>LETRLYECTECEKTFSNQSVLSLHQRTHTGEKIFKCTECEKSFMKRSQLIVHKKCHIEERPYMCTFCEKGYNQHSKLIEHIRTHTGEKPFTCTECKKSFTKRCNLTEHLRIHTGAKPHKCNLCDKTFHYPSNLVEHQRTHTGDRPFQCTECDKSFIKMSKLMVHLRIHTGEKPYKCSECDKSFSQQSTLVVHQRTHTGERPFQCSHCEKSFSYHYAFVVHERTHTGEKPYKCSMCDKAYSQRSNLKLHQKTHESKPQQDSPNCEKTFEQESAPKTATMDQLHESAGLEKVPELPEATNSVESPEAIDDYEKNYIPWSPLSEYLGVFLPPEKQHKCTECDKCFLEKSKLVVHQRTHTGERPFKCSVCDKTFIRMVHLLEHRKIHDGDRPYTCAECGKSFIRMSKLTVHRRTHTGERPYICAECGKQFSQQSNLVVHQRIH</sequence>
<accession>P18747</accession>
<protein>
    <recommendedName>
        <fullName>Oocyte zinc finger protein XlCOF28</fullName>
    </recommendedName>
</protein>